<sequence>MSQEVAAFKLVLVGDGGTGKTTFVKRHETGEFVNRYNATLGVEVHPLNFATDCGNIRFDVWDTAGQEKFGGLRDGYYINGQCGIIMFDVTSRITYKNVPNWHRDLVRVCENIPIVLCGNKVDVKERKVKAKTITFHRKKNLQYYDISAKSNYNFEKPFLWLARKLAGNPSLEFVATPALRPAETAIDPEVMQAMQKDLEEANAMPLPDEDDADF</sequence>
<evidence type="ECO:0000250" key="1"/>
<evidence type="ECO:0000250" key="2">
    <source>
        <dbReference type="UniProtKB" id="P62825"/>
    </source>
</evidence>
<evidence type="ECO:0000255" key="3">
    <source>
        <dbReference type="PROSITE-ProRule" id="PRU00752"/>
    </source>
</evidence>
<evidence type="ECO:0000305" key="4"/>
<proteinExistence type="inferred from homology"/>
<name>GSP1_YARLI</name>
<reference key="1">
    <citation type="submission" date="2002-03" db="EMBL/GenBank/DDBJ databases">
        <title>Isolation of an homolog of GSP1 of Saccharomyces cerevisiae in Yarrowia lipolytica.</title>
        <authorList>
            <person name="Jaafar L."/>
            <person name="Zueco J."/>
        </authorList>
    </citation>
    <scope>NUCLEOTIDE SEQUENCE [GENOMIC DNA]</scope>
</reference>
<reference key="2">
    <citation type="journal article" date="2004" name="Nature">
        <title>Genome evolution in yeasts.</title>
        <authorList>
            <person name="Dujon B."/>
            <person name="Sherman D."/>
            <person name="Fischer G."/>
            <person name="Durrens P."/>
            <person name="Casaregola S."/>
            <person name="Lafontaine I."/>
            <person name="de Montigny J."/>
            <person name="Marck C."/>
            <person name="Neuveglise C."/>
            <person name="Talla E."/>
            <person name="Goffard N."/>
            <person name="Frangeul L."/>
            <person name="Aigle M."/>
            <person name="Anthouard V."/>
            <person name="Babour A."/>
            <person name="Barbe V."/>
            <person name="Barnay S."/>
            <person name="Blanchin S."/>
            <person name="Beckerich J.-M."/>
            <person name="Beyne E."/>
            <person name="Bleykasten C."/>
            <person name="Boisrame A."/>
            <person name="Boyer J."/>
            <person name="Cattolico L."/>
            <person name="Confanioleri F."/>
            <person name="de Daruvar A."/>
            <person name="Despons L."/>
            <person name="Fabre E."/>
            <person name="Fairhead C."/>
            <person name="Ferry-Dumazet H."/>
            <person name="Groppi A."/>
            <person name="Hantraye F."/>
            <person name="Hennequin C."/>
            <person name="Jauniaux N."/>
            <person name="Joyet P."/>
            <person name="Kachouri R."/>
            <person name="Kerrest A."/>
            <person name="Koszul R."/>
            <person name="Lemaire M."/>
            <person name="Lesur I."/>
            <person name="Ma L."/>
            <person name="Muller H."/>
            <person name="Nicaud J.-M."/>
            <person name="Nikolski M."/>
            <person name="Oztas S."/>
            <person name="Ozier-Kalogeropoulos O."/>
            <person name="Pellenz S."/>
            <person name="Potier S."/>
            <person name="Richard G.-F."/>
            <person name="Straub M.-L."/>
            <person name="Suleau A."/>
            <person name="Swennen D."/>
            <person name="Tekaia F."/>
            <person name="Wesolowski-Louvel M."/>
            <person name="Westhof E."/>
            <person name="Wirth B."/>
            <person name="Zeniou-Meyer M."/>
            <person name="Zivanovic Y."/>
            <person name="Bolotin-Fukuhara M."/>
            <person name="Thierry A."/>
            <person name="Bouchier C."/>
            <person name="Caudron B."/>
            <person name="Scarpelli C."/>
            <person name="Gaillardin C."/>
            <person name="Weissenbach J."/>
            <person name="Wincker P."/>
            <person name="Souciet J.-L."/>
        </authorList>
    </citation>
    <scope>NUCLEOTIDE SEQUENCE [LARGE SCALE GENOMIC DNA]</scope>
    <source>
        <strain>CLIB 122 / E 150</strain>
    </source>
</reference>
<accession>Q8TFK3</accession>
<accession>Q6C2V8</accession>
<gene>
    <name type="primary">GSP1</name>
    <name type="ordered locus">YALI0F04730g</name>
</gene>
<feature type="chain" id="PRO_0000208732" description="GTP-binding nuclear protein GSP1/Ran">
    <location>
        <begin position="1"/>
        <end position="214"/>
    </location>
</feature>
<feature type="domain" description="Small GTPase Ran-type" evidence="3">
    <location>
        <begin position="4"/>
        <end position="168"/>
    </location>
</feature>
<feature type="region of interest" description="Switch-I" evidence="3">
    <location>
        <begin position="34"/>
        <end position="42"/>
    </location>
</feature>
<feature type="region of interest" description="Switch-II" evidence="3">
    <location>
        <begin position="65"/>
        <end position="81"/>
    </location>
</feature>
<feature type="binding site" evidence="2">
    <location>
        <begin position="15"/>
        <end position="22"/>
    </location>
    <ligand>
        <name>GTP</name>
        <dbReference type="ChEBI" id="CHEBI:37565"/>
    </ligand>
</feature>
<feature type="binding site" evidence="2">
    <location>
        <position position="65"/>
    </location>
    <ligand>
        <name>GTP</name>
        <dbReference type="ChEBI" id="CHEBI:37565"/>
    </ligand>
</feature>
<feature type="binding site" evidence="2">
    <location>
        <begin position="119"/>
        <end position="122"/>
    </location>
    <ligand>
        <name>GTP</name>
        <dbReference type="ChEBI" id="CHEBI:37565"/>
    </ligand>
</feature>
<feature type="binding site" evidence="2">
    <location>
        <begin position="147"/>
        <end position="149"/>
    </location>
    <ligand>
        <name>GTP</name>
        <dbReference type="ChEBI" id="CHEBI:37565"/>
    </ligand>
</feature>
<protein>
    <recommendedName>
        <fullName>GTP-binding nuclear protein GSP1/Ran</fullName>
    </recommendedName>
</protein>
<dbReference type="EMBL" id="AY090090">
    <property type="protein sequence ID" value="AAM09280.1"/>
    <property type="molecule type" value="Genomic_DNA"/>
</dbReference>
<dbReference type="EMBL" id="CR382132">
    <property type="protein sequence ID" value="CAG77811.1"/>
    <property type="molecule type" value="Genomic_DNA"/>
</dbReference>
<dbReference type="RefSeq" id="XP_505004.1">
    <property type="nucleotide sequence ID" value="XM_505004.1"/>
</dbReference>
<dbReference type="SMR" id="Q8TFK3"/>
<dbReference type="FunCoup" id="Q8TFK3">
    <property type="interactions" value="1552"/>
</dbReference>
<dbReference type="STRING" id="284591.Q8TFK3"/>
<dbReference type="EnsemblFungi" id="CAG77811">
    <property type="protein sequence ID" value="CAG77811"/>
    <property type="gene ID" value="YALI0_F04730g"/>
</dbReference>
<dbReference type="KEGG" id="yli:2908592"/>
<dbReference type="VEuPathDB" id="FungiDB:YALI0_F04730g"/>
<dbReference type="HOGENOM" id="CLU_041217_13_0_1"/>
<dbReference type="InParanoid" id="Q8TFK3"/>
<dbReference type="OMA" id="FNAWDTA"/>
<dbReference type="OrthoDB" id="870at4891"/>
<dbReference type="Proteomes" id="UP000001300">
    <property type="component" value="Chromosome F"/>
</dbReference>
<dbReference type="GO" id="GO:0005737">
    <property type="term" value="C:cytoplasm"/>
    <property type="evidence" value="ECO:0000318"/>
    <property type="project" value="GO_Central"/>
</dbReference>
<dbReference type="GO" id="GO:0005634">
    <property type="term" value="C:nucleus"/>
    <property type="evidence" value="ECO:0000318"/>
    <property type="project" value="GO_Central"/>
</dbReference>
<dbReference type="GO" id="GO:0005525">
    <property type="term" value="F:GTP binding"/>
    <property type="evidence" value="ECO:0007669"/>
    <property type="project" value="UniProtKB-KW"/>
</dbReference>
<dbReference type="GO" id="GO:0003924">
    <property type="term" value="F:GTPase activity"/>
    <property type="evidence" value="ECO:0000318"/>
    <property type="project" value="GO_Central"/>
</dbReference>
<dbReference type="GO" id="GO:0006606">
    <property type="term" value="P:protein import into nucleus"/>
    <property type="evidence" value="ECO:0000318"/>
    <property type="project" value="GO_Central"/>
</dbReference>
<dbReference type="GO" id="GO:0000054">
    <property type="term" value="P:ribosomal subunit export from nucleus"/>
    <property type="evidence" value="ECO:0000318"/>
    <property type="project" value="GO_Central"/>
</dbReference>
<dbReference type="CDD" id="cd00877">
    <property type="entry name" value="Ran"/>
    <property type="match status" value="1"/>
</dbReference>
<dbReference type="FunFam" id="3.40.50.300:FF:000131">
    <property type="entry name" value="GTP-binding nuclear protein Ran"/>
    <property type="match status" value="1"/>
</dbReference>
<dbReference type="Gene3D" id="3.40.50.300">
    <property type="entry name" value="P-loop containing nucleotide triphosphate hydrolases"/>
    <property type="match status" value="1"/>
</dbReference>
<dbReference type="InterPro" id="IPR027417">
    <property type="entry name" value="P-loop_NTPase"/>
</dbReference>
<dbReference type="InterPro" id="IPR002041">
    <property type="entry name" value="Ran_GTPase"/>
</dbReference>
<dbReference type="InterPro" id="IPR005225">
    <property type="entry name" value="Small_GTP-bd"/>
</dbReference>
<dbReference type="InterPro" id="IPR001806">
    <property type="entry name" value="Small_GTPase"/>
</dbReference>
<dbReference type="NCBIfam" id="TIGR00231">
    <property type="entry name" value="small_GTP"/>
    <property type="match status" value="1"/>
</dbReference>
<dbReference type="PANTHER" id="PTHR24071:SF0">
    <property type="entry name" value="GTP-BINDING NUCLEAR PROTEIN RAN"/>
    <property type="match status" value="1"/>
</dbReference>
<dbReference type="PANTHER" id="PTHR24071">
    <property type="entry name" value="RAN GTPASE"/>
    <property type="match status" value="1"/>
</dbReference>
<dbReference type="Pfam" id="PF00071">
    <property type="entry name" value="Ras"/>
    <property type="match status" value="1"/>
</dbReference>
<dbReference type="PRINTS" id="PR00627">
    <property type="entry name" value="GTPRANTC4"/>
</dbReference>
<dbReference type="SMART" id="SM00175">
    <property type="entry name" value="RAB"/>
    <property type="match status" value="1"/>
</dbReference>
<dbReference type="SMART" id="SM00176">
    <property type="entry name" value="RAN"/>
    <property type="match status" value="1"/>
</dbReference>
<dbReference type="SMART" id="SM00173">
    <property type="entry name" value="RAS"/>
    <property type="match status" value="1"/>
</dbReference>
<dbReference type="SMART" id="SM00174">
    <property type="entry name" value="RHO"/>
    <property type="match status" value="1"/>
</dbReference>
<dbReference type="SUPFAM" id="SSF52540">
    <property type="entry name" value="P-loop containing nucleoside triphosphate hydrolases"/>
    <property type="match status" value="1"/>
</dbReference>
<dbReference type="PROSITE" id="PS51418">
    <property type="entry name" value="RAN"/>
    <property type="match status" value="1"/>
</dbReference>
<organism>
    <name type="scientific">Yarrowia lipolytica (strain CLIB 122 / E 150)</name>
    <name type="common">Yeast</name>
    <name type="synonym">Candida lipolytica</name>
    <dbReference type="NCBI Taxonomy" id="284591"/>
    <lineage>
        <taxon>Eukaryota</taxon>
        <taxon>Fungi</taxon>
        <taxon>Dikarya</taxon>
        <taxon>Ascomycota</taxon>
        <taxon>Saccharomycotina</taxon>
        <taxon>Dipodascomycetes</taxon>
        <taxon>Dipodascales</taxon>
        <taxon>Dipodascales incertae sedis</taxon>
        <taxon>Yarrowia</taxon>
    </lineage>
</organism>
<comment type="function">
    <text evidence="1">GTP-binding protein involved in nucleocytoplasmic transport. Required for the import of protein into the nucleus and also for RNA export. Involved in chromatin condensation and control of cell cycle (By similarity).</text>
</comment>
<comment type="subunit">
    <text evidence="2">Found in a nuclear export complex with RanGTP, exportin and pre-miRNA (By similarity).</text>
</comment>
<comment type="subcellular location">
    <subcellularLocation>
        <location evidence="1">Nucleus</location>
    </subcellularLocation>
</comment>
<comment type="similarity">
    <text evidence="3 4">Belongs to the small GTPase superfamily. Ran family.</text>
</comment>
<keyword id="KW-0342">GTP-binding</keyword>
<keyword id="KW-0547">Nucleotide-binding</keyword>
<keyword id="KW-0539">Nucleus</keyword>
<keyword id="KW-0653">Protein transport</keyword>
<keyword id="KW-1185">Reference proteome</keyword>
<keyword id="KW-0813">Transport</keyword>